<name>YG12B_YEAST</name>
<proteinExistence type="inferred from homology"/>
<accession>Q12269</accession>
<accession>D6VUH6</accession>
<keyword id="KW-0064">Aspartyl protease</keyword>
<keyword id="KW-0067">ATP-binding</keyword>
<keyword id="KW-0963">Cytoplasm</keyword>
<keyword id="KW-0229">DNA integration</keyword>
<keyword id="KW-0233">DNA recombination</keyword>
<keyword id="KW-0238">DNA-binding</keyword>
<keyword id="KW-0239">DNA-directed DNA polymerase</keyword>
<keyword id="KW-0255">Endonuclease</keyword>
<keyword id="KW-0378">Hydrolase</keyword>
<keyword id="KW-0460">Magnesium</keyword>
<keyword id="KW-0479">Metal-binding</keyword>
<keyword id="KW-0511">Multifunctional enzyme</keyword>
<keyword id="KW-0540">Nuclease</keyword>
<keyword id="KW-0547">Nucleotide-binding</keyword>
<keyword id="KW-0548">Nucleotidyltransferase</keyword>
<keyword id="KW-0539">Nucleus</keyword>
<keyword id="KW-0597">Phosphoprotein</keyword>
<keyword id="KW-0645">Protease</keyword>
<keyword id="KW-1185">Reference proteome</keyword>
<keyword id="KW-0688">Ribosomal frameshifting</keyword>
<keyword id="KW-0694">RNA-binding</keyword>
<keyword id="KW-0695">RNA-directed DNA polymerase</keyword>
<keyword id="KW-0808">Transferase</keyword>
<keyword id="KW-0814">Transposable element</keyword>
<keyword id="KW-0815">Transposition</keyword>
<keyword id="KW-1188">Viral release from host cell</keyword>
<keyword id="KW-0917">Virion maturation</keyword>
<keyword id="KW-0862">Zinc</keyword>
<keyword id="KW-0863">Zinc-finger</keyword>
<sequence>MESQQLSQHSHISHGSACASVTSKEVHTNQDPLDVSASKIQEYDKASTKANSQQTTTPASSAVPENPHHASPQPASVPPPQNGPYPQQCMMTQNQANPSGWSFYGHPSMIPYTPYQMSPMYFPPGPQSQFPQYPSSVGTPLSTPSPESGNTFTDSSSADSDMTSTKKYVRPPPMLTSPNDFPNWVKTYIKFLQNSNLGGIIPTVNGKPVRQITDDELTFLYNTFQIFAPSQFLPTWVKDILSVDYTDIMKILSKSIEKMQSDTQEANDIVTLANLQYNGSTPADAFETKVTNIIDRLNNNGIHINNKVACQLIMRGLSGEYKFLRYTRHRHLNMTVAELFLDIHAIYEEQQGSRNSKPNYRRNPSDEKNDSRSYTNTTKPKVIARNPQKTNNSKSKTARAHNVSTSNNSPSTDNDSISKSTTEPIQLNNKHDLHLGQELTESTVNHTNHSDDELPGHLLLDSGASRTLIRSAHHIHSASSNPGINVVDAQKRNIPINAIGDLQFHFQDNTKTSIKVLHTPNIAYDLLSLNELAAVDITACFTKNVLERSDGTVLAPIVKYGDFYWVSKKYLLPSNISVPTINNVHTSESTRKYPYPFIHRMLAHANAQTIRYSLKNNTITYFNESDVDWSSAIDYQCPDCLIGKSTKHRHIKGSRLKYQNSYEPFQYLHTDIFGPVHNLPNSAPSYFISFTDETTKFRWVYPLHDRREDSILDVFTTILAFIKNQFQASVLVIQMDRGSEYTNRTLHKFLEKNGITPCYTTTADSRAHGVAERLNRTLLDDCRTQLQCSGLPNHLWFSAIEFSTIVRNSLASPKSKKSARQHAGLAGLDISTLLPFGQPVIVNDHNPNSKIHPRGIPGYALHPSRNSYGYIIYLPSLKKTVDTTNYVILQGKESRLDQFNYDALTFDEDLNRLTASYHSFIASNEIQESNDLNIESDHDFQSDIELHPEQPRNVLSKAVSPTDSTPPSTHTEDSKRVSKTNIRAPREVDPNISESNILPSKKRSSTPQISNIESTGSGGMHKLNVPLLAPMSQSNTHESSHASKSKDFRHSDSYSENETNHTNVPISSTGGTNNKTVPQISDQETEKRIIHRSPSIDASPPENNSSHNIVPIKTPTTVSEQNTEESIIADLPLPDLPPESPTEFPDPFKELPPINSHQTNSSLGGIGDSNAYTTINSKKRSLEDNETEIKVSRDTWNTKNMRSLEPPRSKKRIHLIAAVKAVKSIKPIRTTLRYDEAITYNKDIKEKEKYIEAYHKEVNQLLKMNTWDTDKYYDRKEIDPKRVINSMFIFNRKRDGTHKARFVARGDIQHPDTYDSGMQSNTVHHYALMTSLSLALDNNYYITQLDISSAYLYADIKEELYIRPPPHLGMNDKLIRLKKSLYGLKQSGANWYETIKSYLIKQCGMEEVRGWSCVFKNSQVTICLFVDDMILFSKDLNANKKIITTLKKQYDTKIINLGESDNEIQYDILGLEIKYQRGKYMKLGMENSLTEKIPKLNVPLNPKGRKLSAPGQPGLYIDQDELEIDEDEYKEKVHEMQKLIGLASYVGYKFRFDLLYYINTLAQHILFPSRQVLDMTYELIQFMWDTRDKQLIWHKNKPTEPDNKLVAISDASYGNQPYYKSQIGNIFLLNGKVIGGKSTKASLTCTSTTEAEIHAVSEAIPLLNNLSHLVQELNKKPIIKGLLTDSRSTISIIKSTNEEKFRNRFFGTKAMRLRDEVSGNNLYVYYIETKKNIADVMTKPLPIKTFKLLTNKWIH</sequence>
<gene>
    <name type="primary">TY1B-GR2</name>
    <name type="synonym">YGRCTy1-2 POL</name>
    <name type="ordered locus">YGR038C-B</name>
    <name type="ORF">G4126</name>
</gene>
<organism>
    <name type="scientific">Saccharomyces cerevisiae (strain ATCC 204508 / S288c)</name>
    <name type="common">Baker's yeast</name>
    <dbReference type="NCBI Taxonomy" id="559292"/>
    <lineage>
        <taxon>Eukaryota</taxon>
        <taxon>Fungi</taxon>
        <taxon>Dikarya</taxon>
        <taxon>Ascomycota</taxon>
        <taxon>Saccharomycotina</taxon>
        <taxon>Saccharomycetes</taxon>
        <taxon>Saccharomycetales</taxon>
        <taxon>Saccharomycetaceae</taxon>
        <taxon>Saccharomyces</taxon>
    </lineage>
</organism>
<feature type="chain" id="PRO_0000279061" description="Transposon Ty1-GR2 Gag-Pol polyprotein">
    <location>
        <begin position="1"/>
        <end position="1755"/>
    </location>
</feature>
<feature type="chain" id="PRO_0000279062" description="Capsid protein" evidence="1">
    <location>
        <begin position="1"/>
        <end position="401"/>
    </location>
</feature>
<feature type="chain" id="PRO_0000279063" description="Ty1 protease" evidence="1">
    <location>
        <begin position="402"/>
        <end position="582"/>
    </location>
</feature>
<feature type="chain" id="PRO_0000279064" description="Integrase" evidence="1">
    <location>
        <begin position="583"/>
        <end position="1217"/>
    </location>
</feature>
<feature type="chain" id="PRO_0000279065" description="Reverse transcriptase/ribonuclease H" evidence="1">
    <location>
        <begin position="1218"/>
        <end position="1755"/>
    </location>
</feature>
<feature type="domain" description="Integrase catalytic" evidence="3">
    <location>
        <begin position="660"/>
        <end position="835"/>
    </location>
</feature>
<feature type="domain" description="Reverse transcriptase Ty1/copia-type">
    <location>
        <begin position="1338"/>
        <end position="1476"/>
    </location>
</feature>
<feature type="domain" description="RNase H Ty1/copia-type">
    <location>
        <begin position="1610"/>
        <end position="1752"/>
    </location>
</feature>
<feature type="region of interest" description="Disordered" evidence="5">
    <location>
        <begin position="1"/>
        <end position="93"/>
    </location>
</feature>
<feature type="region of interest" description="Disordered" evidence="5">
    <location>
        <begin position="126"/>
        <end position="173"/>
    </location>
</feature>
<feature type="region of interest" description="RNA-binding" evidence="1">
    <location>
        <begin position="299"/>
        <end position="401"/>
    </location>
</feature>
<feature type="region of interest" description="Disordered" evidence="5">
    <location>
        <begin position="352"/>
        <end position="421"/>
    </location>
</feature>
<feature type="region of interest" description="Integrase-type zinc finger-like">
    <location>
        <begin position="583"/>
        <end position="640"/>
    </location>
</feature>
<feature type="region of interest" description="Disordered" evidence="5">
    <location>
        <begin position="956"/>
        <end position="1087"/>
    </location>
</feature>
<feature type="region of interest" description="Disordered" evidence="5">
    <location>
        <begin position="1092"/>
        <end position="1111"/>
    </location>
</feature>
<feature type="region of interest" description="Disordered" evidence="5">
    <location>
        <begin position="1130"/>
        <end position="1187"/>
    </location>
</feature>
<feature type="short sequence motif" description="Bipartite nuclear localization signal" evidence="1">
    <location>
        <begin position="1178"/>
        <end position="1212"/>
    </location>
</feature>
<feature type="compositionally biased region" description="Low complexity" evidence="5">
    <location>
        <begin position="1"/>
        <end position="16"/>
    </location>
</feature>
<feature type="compositionally biased region" description="Polar residues" evidence="5">
    <location>
        <begin position="48"/>
        <end position="60"/>
    </location>
</feature>
<feature type="compositionally biased region" description="Polar residues" evidence="5">
    <location>
        <begin position="127"/>
        <end position="152"/>
    </location>
</feature>
<feature type="compositionally biased region" description="Low complexity" evidence="5">
    <location>
        <begin position="153"/>
        <end position="165"/>
    </location>
</feature>
<feature type="compositionally biased region" description="Low complexity" evidence="5">
    <location>
        <begin position="402"/>
        <end position="418"/>
    </location>
</feature>
<feature type="compositionally biased region" description="Low complexity" evidence="5">
    <location>
        <begin position="960"/>
        <end position="969"/>
    </location>
</feature>
<feature type="compositionally biased region" description="Polar residues" evidence="5">
    <location>
        <begin position="1005"/>
        <end position="1015"/>
    </location>
</feature>
<feature type="compositionally biased region" description="Basic and acidic residues" evidence="5">
    <location>
        <begin position="1038"/>
        <end position="1053"/>
    </location>
</feature>
<feature type="compositionally biased region" description="Polar residues" evidence="5">
    <location>
        <begin position="1054"/>
        <end position="1082"/>
    </location>
</feature>
<feature type="compositionally biased region" description="Polar residues" evidence="5">
    <location>
        <begin position="1101"/>
        <end position="1111"/>
    </location>
</feature>
<feature type="active site" description="For protease activity; shared with dimeric partner" evidence="4">
    <location>
        <position position="461"/>
    </location>
</feature>
<feature type="binding site" evidence="3">
    <location>
        <position position="671"/>
    </location>
    <ligand>
        <name>Mg(2+)</name>
        <dbReference type="ChEBI" id="CHEBI:18420"/>
        <label>1</label>
        <note>catalytic; for integrase activity</note>
    </ligand>
</feature>
<feature type="binding site" evidence="3">
    <location>
        <position position="736"/>
    </location>
    <ligand>
        <name>Mg(2+)</name>
        <dbReference type="ChEBI" id="CHEBI:18420"/>
        <label>1</label>
        <note>catalytic; for integrase activity</note>
    </ligand>
</feature>
<feature type="binding site" evidence="3">
    <location>
        <position position="1346"/>
    </location>
    <ligand>
        <name>Mg(2+)</name>
        <dbReference type="ChEBI" id="CHEBI:18420"/>
        <label>2</label>
        <note>catalytic; for reverse transcriptase activity</note>
    </ligand>
</feature>
<feature type="binding site" evidence="3">
    <location>
        <position position="1427"/>
    </location>
    <ligand>
        <name>Mg(2+)</name>
        <dbReference type="ChEBI" id="CHEBI:18420"/>
        <label>2</label>
        <note>catalytic; for reverse transcriptase activity</note>
    </ligand>
</feature>
<feature type="binding site" evidence="3">
    <location>
        <position position="1428"/>
    </location>
    <ligand>
        <name>Mg(2+)</name>
        <dbReference type="ChEBI" id="CHEBI:18420"/>
        <label>2</label>
        <note>catalytic; for reverse transcriptase activity</note>
    </ligand>
</feature>
<feature type="binding site" evidence="3">
    <location>
        <position position="1610"/>
    </location>
    <ligand>
        <name>Mg(2+)</name>
        <dbReference type="ChEBI" id="CHEBI:18420"/>
        <label>3</label>
        <note>catalytic; for RNase H activity</note>
    </ligand>
</feature>
<feature type="binding site" evidence="3">
    <location>
        <position position="1652"/>
    </location>
    <ligand>
        <name>Mg(2+)</name>
        <dbReference type="ChEBI" id="CHEBI:18420"/>
        <label>3</label>
        <note>catalytic; for RNase H activity</note>
    </ligand>
</feature>
<feature type="binding site" evidence="3">
    <location>
        <position position="1685"/>
    </location>
    <ligand>
        <name>Mg(2+)</name>
        <dbReference type="ChEBI" id="CHEBI:18420"/>
        <label>3</label>
        <note>catalytic; for RNase H activity</note>
    </ligand>
</feature>
<feature type="site" description="Cleavage; by Ty1 protease" evidence="1">
    <location>
        <begin position="401"/>
        <end position="402"/>
    </location>
</feature>
<feature type="site" description="Cleavage; by Ty1 protease" evidence="1">
    <location>
        <begin position="582"/>
        <end position="583"/>
    </location>
</feature>
<feature type="site" description="Cleavage; by Ty1 protease" evidence="1">
    <location>
        <begin position="1217"/>
        <end position="1218"/>
    </location>
</feature>
<feature type="modified residue" description="Phosphoserine" evidence="2">
    <location>
        <position position="416"/>
    </location>
</feature>
<reference key="1">
    <citation type="journal article" date="1997" name="Nature">
        <title>The nucleotide sequence of Saccharomyces cerevisiae chromosome VII.</title>
        <authorList>
            <person name="Tettelin H."/>
            <person name="Agostoni-Carbone M.L."/>
            <person name="Albermann K."/>
            <person name="Albers M."/>
            <person name="Arroyo J."/>
            <person name="Backes U."/>
            <person name="Barreiros T."/>
            <person name="Bertani I."/>
            <person name="Bjourson A.J."/>
            <person name="Brueckner M."/>
            <person name="Bruschi C.V."/>
            <person name="Carignani G."/>
            <person name="Castagnoli L."/>
            <person name="Cerdan E."/>
            <person name="Clemente M.L."/>
            <person name="Coblenz A."/>
            <person name="Coglievina M."/>
            <person name="Coissac E."/>
            <person name="Defoor E."/>
            <person name="Del Bino S."/>
            <person name="Delius H."/>
            <person name="Delneri D."/>
            <person name="de Wergifosse P."/>
            <person name="Dujon B."/>
            <person name="Durand P."/>
            <person name="Entian K.-D."/>
            <person name="Eraso P."/>
            <person name="Escribano V."/>
            <person name="Fabiani L."/>
            <person name="Fartmann B."/>
            <person name="Feroli F."/>
            <person name="Feuermann M."/>
            <person name="Frontali L."/>
            <person name="Garcia-Gonzalez M."/>
            <person name="Garcia-Saez M.I."/>
            <person name="Goffeau A."/>
            <person name="Guerreiro P."/>
            <person name="Hani J."/>
            <person name="Hansen M."/>
            <person name="Hebling U."/>
            <person name="Hernandez K."/>
            <person name="Heumann K."/>
            <person name="Hilger F."/>
            <person name="Hofmann B."/>
            <person name="Indge K.J."/>
            <person name="James C.M."/>
            <person name="Klima R."/>
            <person name="Koetter P."/>
            <person name="Kramer B."/>
            <person name="Kramer W."/>
            <person name="Lauquin G."/>
            <person name="Leuther H."/>
            <person name="Louis E.J."/>
            <person name="Maillier E."/>
            <person name="Marconi A."/>
            <person name="Martegani E."/>
            <person name="Mazon M.J."/>
            <person name="Mazzoni C."/>
            <person name="McReynolds A.D.K."/>
            <person name="Melchioretto P."/>
            <person name="Mewes H.-W."/>
            <person name="Minenkova O."/>
            <person name="Mueller-Auer S."/>
            <person name="Nawrocki A."/>
            <person name="Netter P."/>
            <person name="Neu R."/>
            <person name="Nombela C."/>
            <person name="Oliver S.G."/>
            <person name="Panzeri L."/>
            <person name="Paoluzi S."/>
            <person name="Plevani P."/>
            <person name="Portetelle D."/>
            <person name="Portillo F."/>
            <person name="Potier S."/>
            <person name="Purnelle B."/>
            <person name="Rieger M."/>
            <person name="Riles L."/>
            <person name="Rinaldi T."/>
            <person name="Robben J."/>
            <person name="Rodrigues-Pousada C."/>
            <person name="Rodriguez-Belmonte E."/>
            <person name="Rodriguez-Torres A.M."/>
            <person name="Rose M."/>
            <person name="Ruzzi M."/>
            <person name="Saliola M."/>
            <person name="Sanchez-Perez M."/>
            <person name="Schaefer B."/>
            <person name="Schaefer M."/>
            <person name="Scharfe M."/>
            <person name="Schmidheini T."/>
            <person name="Schreer A."/>
            <person name="Skala J."/>
            <person name="Souciet J.-L."/>
            <person name="Steensma H.Y."/>
            <person name="Talla E."/>
            <person name="Thierry A."/>
            <person name="Vandenbol M."/>
            <person name="van der Aart Q.J.M."/>
            <person name="Van Dyck L."/>
            <person name="Vanoni M."/>
            <person name="Verhasselt P."/>
            <person name="Voet M."/>
            <person name="Volckaert G."/>
            <person name="Wambutt R."/>
            <person name="Watson M.D."/>
            <person name="Weber N."/>
            <person name="Wedler E."/>
            <person name="Wedler H."/>
            <person name="Wipfli P."/>
            <person name="Wolf K."/>
            <person name="Wright L.F."/>
            <person name="Zaccaria P."/>
            <person name="Zimmermann M."/>
            <person name="Zollner A."/>
            <person name="Kleine K."/>
        </authorList>
    </citation>
    <scope>NUCLEOTIDE SEQUENCE [LARGE SCALE GENOMIC DNA]</scope>
    <source>
        <strain>ATCC 204508 / S288c</strain>
    </source>
</reference>
<reference key="2">
    <citation type="journal article" date="2014" name="G3 (Bethesda)">
        <title>The reference genome sequence of Saccharomyces cerevisiae: Then and now.</title>
        <authorList>
            <person name="Engel S.R."/>
            <person name="Dietrich F.S."/>
            <person name="Fisk D.G."/>
            <person name="Binkley G."/>
            <person name="Balakrishnan R."/>
            <person name="Costanzo M.C."/>
            <person name="Dwight S.S."/>
            <person name="Hitz B.C."/>
            <person name="Karra K."/>
            <person name="Nash R.S."/>
            <person name="Weng S."/>
            <person name="Wong E.D."/>
            <person name="Lloyd P."/>
            <person name="Skrzypek M.S."/>
            <person name="Miyasato S.R."/>
            <person name="Simison M."/>
            <person name="Cherry J.M."/>
        </authorList>
    </citation>
    <scope>GENOME REANNOTATION</scope>
    <source>
        <strain>ATCC 204508 / S288c</strain>
    </source>
</reference>
<reference key="3">
    <citation type="journal article" date="1998" name="Genome Res.">
        <title>Transposable elements and genome organization: a comprehensive survey of retrotransposons revealed by the complete Saccharomyces cerevisiae genome sequence.</title>
        <authorList>
            <person name="Kim J.M."/>
            <person name="Vanguri S."/>
            <person name="Boeke J.D."/>
            <person name="Gabriel A."/>
            <person name="Voytas D.F."/>
        </authorList>
    </citation>
    <scope>NOMENCLATURE</scope>
</reference>
<reference key="4">
    <citation type="journal article" date="2005" name="Cytogenet. Genome Res.">
        <title>Happy together: the life and times of Ty retrotransposons and their hosts.</title>
        <authorList>
            <person name="Lesage P."/>
            <person name="Todeschini A.L."/>
        </authorList>
    </citation>
    <scope>REVIEW</scope>
</reference>
<reference key="5">
    <citation type="journal article" date="2005" name="Cytogenet. Genome Res.">
        <title>Reverse transcriptase and integrase of the Saccharomyces cerevisiae Ty1 element.</title>
        <authorList>
            <person name="Wilhelm F.-X."/>
            <person name="Wilhelm M."/>
            <person name="Gabriel A."/>
        </authorList>
    </citation>
    <scope>REVIEW</scope>
    <scope>DOMAINS</scope>
</reference>
<dbReference type="EC" id="3.4.23.-"/>
<dbReference type="EC" id="2.7.7.49"/>
<dbReference type="EC" id="2.7.7.7"/>
<dbReference type="EC" id="3.1.26.4"/>
<dbReference type="EMBL" id="Z72823">
    <property type="protein sequence ID" value="CAA97027.1"/>
    <property type="status" value="ALT_INIT"/>
    <property type="molecule type" value="Genomic_DNA"/>
</dbReference>
<dbReference type="EMBL" id="Z72824">
    <property type="protein sequence ID" value="CAA97035.1"/>
    <property type="status" value="ALT_INIT"/>
    <property type="molecule type" value="Genomic_DNA"/>
</dbReference>
<dbReference type="EMBL" id="BK006941">
    <property type="protein sequence ID" value="DAA08137.1"/>
    <property type="molecule type" value="Genomic_DNA"/>
</dbReference>
<dbReference type="PIR" id="S69839">
    <property type="entry name" value="S69839"/>
</dbReference>
<dbReference type="RefSeq" id="NP_058160.1">
    <molecule id="Q12269-1"/>
    <property type="nucleotide sequence ID" value="NM_001184434.2"/>
</dbReference>
<dbReference type="SMR" id="Q12269"/>
<dbReference type="BioGRID" id="33285">
    <property type="interactions" value="6"/>
</dbReference>
<dbReference type="FunCoup" id="Q12269">
    <property type="interactions" value="51"/>
</dbReference>
<dbReference type="IntAct" id="Q12269">
    <property type="interactions" value="1"/>
</dbReference>
<dbReference type="MINT" id="Q12269"/>
<dbReference type="GlyGen" id="Q12269">
    <property type="glycosylation" value="3 sites"/>
</dbReference>
<dbReference type="PaxDb" id="4932-YGR038C-B"/>
<dbReference type="PeptideAtlas" id="Q12269"/>
<dbReference type="GeneID" id="852928"/>
<dbReference type="KEGG" id="sce:YGR038C-B"/>
<dbReference type="AGR" id="SGD:S000007408"/>
<dbReference type="SGD" id="S000007408">
    <property type="gene designation" value="YGR038C-B"/>
</dbReference>
<dbReference type="VEuPathDB" id="FungiDB:YGR038C-B"/>
<dbReference type="eggNOG" id="KOG0017">
    <property type="taxonomic scope" value="Eukaryota"/>
</dbReference>
<dbReference type="HOGENOM" id="CLU_244151_0_0_1"/>
<dbReference type="InParanoid" id="Q12269"/>
<dbReference type="OrthoDB" id="5423336at2759"/>
<dbReference type="Proteomes" id="UP000002311">
    <property type="component" value="Chromosome VII"/>
</dbReference>
<dbReference type="RNAct" id="Q12269">
    <property type="molecule type" value="protein"/>
</dbReference>
<dbReference type="GO" id="GO:0005737">
    <property type="term" value="C:cytoplasm"/>
    <property type="evidence" value="ECO:0007669"/>
    <property type="project" value="UniProtKB-SubCell"/>
</dbReference>
<dbReference type="GO" id="GO:0005634">
    <property type="term" value="C:nucleus"/>
    <property type="evidence" value="ECO:0000314"/>
    <property type="project" value="SGD"/>
</dbReference>
<dbReference type="GO" id="GO:0004190">
    <property type="term" value="F:aspartic-type endopeptidase activity"/>
    <property type="evidence" value="ECO:0007669"/>
    <property type="project" value="UniProtKB-KW"/>
</dbReference>
<dbReference type="GO" id="GO:0005524">
    <property type="term" value="F:ATP binding"/>
    <property type="evidence" value="ECO:0007669"/>
    <property type="project" value="UniProtKB-KW"/>
</dbReference>
<dbReference type="GO" id="GO:0003677">
    <property type="term" value="F:DNA binding"/>
    <property type="evidence" value="ECO:0007669"/>
    <property type="project" value="UniProtKB-KW"/>
</dbReference>
<dbReference type="GO" id="GO:0003887">
    <property type="term" value="F:DNA-directed DNA polymerase activity"/>
    <property type="evidence" value="ECO:0007669"/>
    <property type="project" value="UniProtKB-KW"/>
</dbReference>
<dbReference type="GO" id="GO:0003723">
    <property type="term" value="F:RNA binding"/>
    <property type="evidence" value="ECO:0007669"/>
    <property type="project" value="UniProtKB-KW"/>
</dbReference>
<dbReference type="GO" id="GO:0003964">
    <property type="term" value="F:RNA-directed DNA polymerase activity"/>
    <property type="evidence" value="ECO:0007669"/>
    <property type="project" value="UniProtKB-KW"/>
</dbReference>
<dbReference type="GO" id="GO:0004523">
    <property type="term" value="F:RNA-DNA hybrid ribonuclease activity"/>
    <property type="evidence" value="ECO:0007669"/>
    <property type="project" value="UniProtKB-EC"/>
</dbReference>
<dbReference type="GO" id="GO:0008270">
    <property type="term" value="F:zinc ion binding"/>
    <property type="evidence" value="ECO:0007669"/>
    <property type="project" value="UniProtKB-KW"/>
</dbReference>
<dbReference type="GO" id="GO:0015074">
    <property type="term" value="P:DNA integration"/>
    <property type="evidence" value="ECO:0007669"/>
    <property type="project" value="UniProtKB-KW"/>
</dbReference>
<dbReference type="GO" id="GO:0006310">
    <property type="term" value="P:DNA recombination"/>
    <property type="evidence" value="ECO:0007669"/>
    <property type="project" value="UniProtKB-KW"/>
</dbReference>
<dbReference type="GO" id="GO:0006508">
    <property type="term" value="P:proteolysis"/>
    <property type="evidence" value="ECO:0007669"/>
    <property type="project" value="UniProtKB-KW"/>
</dbReference>
<dbReference type="GO" id="GO:0032196">
    <property type="term" value="P:transposition"/>
    <property type="evidence" value="ECO:0007669"/>
    <property type="project" value="UniProtKB-KW"/>
</dbReference>
<dbReference type="GO" id="GO:0075523">
    <property type="term" value="P:viral translational frameshifting"/>
    <property type="evidence" value="ECO:0007669"/>
    <property type="project" value="UniProtKB-KW"/>
</dbReference>
<dbReference type="CDD" id="cd09272">
    <property type="entry name" value="RNase_HI_RT_Ty1"/>
    <property type="match status" value="1"/>
</dbReference>
<dbReference type="FunFam" id="3.30.420.10:FF:000050">
    <property type="entry name" value="Transposon Ty2-DR3 Gag-Pol polyprotein"/>
    <property type="match status" value="1"/>
</dbReference>
<dbReference type="Gene3D" id="3.30.420.10">
    <property type="entry name" value="Ribonuclease H-like superfamily/Ribonuclease H"/>
    <property type="match status" value="1"/>
</dbReference>
<dbReference type="InterPro" id="IPR001969">
    <property type="entry name" value="Aspartic_peptidase_AS"/>
</dbReference>
<dbReference type="InterPro" id="IPR043502">
    <property type="entry name" value="DNA/RNA_pol_sf"/>
</dbReference>
<dbReference type="InterPro" id="IPR001584">
    <property type="entry name" value="Integrase_cat-core"/>
</dbReference>
<dbReference type="InterPro" id="IPR039537">
    <property type="entry name" value="Retrotran_Ty1/copia-like"/>
</dbReference>
<dbReference type="InterPro" id="IPR012337">
    <property type="entry name" value="RNaseH-like_sf"/>
</dbReference>
<dbReference type="InterPro" id="IPR036397">
    <property type="entry name" value="RNaseH_sf"/>
</dbReference>
<dbReference type="InterPro" id="IPR013103">
    <property type="entry name" value="RVT_2"/>
</dbReference>
<dbReference type="InterPro" id="IPR015820">
    <property type="entry name" value="TYA"/>
</dbReference>
<dbReference type="PANTHER" id="PTHR42648">
    <property type="entry name" value="TRANSPOSASE, PUTATIVE-RELATED"/>
    <property type="match status" value="1"/>
</dbReference>
<dbReference type="PANTHER" id="PTHR42648:SF11">
    <property type="entry name" value="TRANSPOSON TY4-P GAG-POL POLYPROTEIN"/>
    <property type="match status" value="1"/>
</dbReference>
<dbReference type="Pfam" id="PF00665">
    <property type="entry name" value="rve"/>
    <property type="match status" value="1"/>
</dbReference>
<dbReference type="Pfam" id="PF07727">
    <property type="entry name" value="RVT_2"/>
    <property type="match status" value="1"/>
</dbReference>
<dbReference type="Pfam" id="PF01021">
    <property type="entry name" value="TYA"/>
    <property type="match status" value="1"/>
</dbReference>
<dbReference type="SUPFAM" id="SSF56672">
    <property type="entry name" value="DNA/RNA polymerases"/>
    <property type="match status" value="1"/>
</dbReference>
<dbReference type="SUPFAM" id="SSF53098">
    <property type="entry name" value="Ribonuclease H-like"/>
    <property type="match status" value="1"/>
</dbReference>
<dbReference type="PROSITE" id="PS00141">
    <property type="entry name" value="ASP_PROTEASE"/>
    <property type="match status" value="1"/>
</dbReference>
<dbReference type="PROSITE" id="PS50994">
    <property type="entry name" value="INTEGRASE"/>
    <property type="match status" value="1"/>
</dbReference>
<comment type="function">
    <text evidence="1">Capsid protein (CA) is the structural component of the virus-like particle (VLP), forming the shell that encapsulates the retrotransposons dimeric RNA genome. The particles are assembled from trimer-clustered units and there are holes in the capsid shells that allow for the diffusion of macromolecules. CA also has nucleocapsid-like chaperone activity, promoting primer tRNA(i)-Met annealing to the multipartite primer-binding site (PBS), dimerization of Ty1 RNA and initiation of reverse transcription (By similarity).</text>
</comment>
<comment type="function">
    <text evidence="1">The aspartyl protease (PR) mediates the proteolytic cleavages of the Gag and Gag-Pol polyproteins after assembly of the VLP.</text>
</comment>
<comment type="function">
    <text evidence="1">Reverse transcriptase/ribonuclease H (RT) is a multifunctional enzyme that catalyzes the conversion of the retro-elements RNA genome into dsDNA within the VLP. The enzyme displays a DNA polymerase activity that can copy either DNA or RNA templates, and a ribonuclease H (RNase H) activity that cleaves the RNA strand of RNA-DNA heteroduplexes during plus-strand synthesis and hydrolyzes RNA primers. The conversion leads to a linear dsDNA copy of the retrotransposon that includes long terminal repeats (LTRs) at both ends (By similarity).</text>
</comment>
<comment type="function">
    <text evidence="1">Integrase (IN) targets the VLP to the nucleus, where a subparticle preintegration complex (PIC) containing at least integrase and the newly synthesized dsDNA copy of the retrotransposon must transit the nuclear membrane. Once in the nucleus, integrase performs the integration of the dsDNA into the host genome (By similarity).</text>
</comment>
<comment type="catalytic activity">
    <reaction>
        <text>DNA(n) + a 2'-deoxyribonucleoside 5'-triphosphate = DNA(n+1) + diphosphate</text>
        <dbReference type="Rhea" id="RHEA:22508"/>
        <dbReference type="Rhea" id="RHEA-COMP:17339"/>
        <dbReference type="Rhea" id="RHEA-COMP:17340"/>
        <dbReference type="ChEBI" id="CHEBI:33019"/>
        <dbReference type="ChEBI" id="CHEBI:61560"/>
        <dbReference type="ChEBI" id="CHEBI:173112"/>
        <dbReference type="EC" id="2.7.7.49"/>
    </reaction>
</comment>
<comment type="catalytic activity">
    <reaction>
        <text>DNA(n) + a 2'-deoxyribonucleoside 5'-triphosphate = DNA(n+1) + diphosphate</text>
        <dbReference type="Rhea" id="RHEA:22508"/>
        <dbReference type="Rhea" id="RHEA-COMP:17339"/>
        <dbReference type="Rhea" id="RHEA-COMP:17340"/>
        <dbReference type="ChEBI" id="CHEBI:33019"/>
        <dbReference type="ChEBI" id="CHEBI:61560"/>
        <dbReference type="ChEBI" id="CHEBI:173112"/>
        <dbReference type="EC" id="2.7.7.7"/>
    </reaction>
</comment>
<comment type="catalytic activity">
    <reaction>
        <text>Endonucleolytic cleavage to 5'-phosphomonoester.</text>
        <dbReference type="EC" id="3.1.26.4"/>
    </reaction>
</comment>
<comment type="subunit">
    <text evidence="1">The capsid protein forms a homotrimer, from which the VLPs are assembled. The protease is a homodimer, whose active site consists of two apposed aspartic acid residues (By similarity).</text>
</comment>
<comment type="subcellular location">
    <subcellularLocation>
        <location>Cytoplasm</location>
    </subcellularLocation>
    <subcellularLocation>
        <location evidence="1">Nucleus</location>
    </subcellularLocation>
</comment>
<comment type="alternative products">
    <event type="ribosomal frameshifting"/>
    <isoform>
        <id>Q12269-1</id>
        <name>Transposon Ty1-GR2 Gag-Pol polyprotein</name>
        <sequence type="displayed"/>
    </isoform>
    <isoform>
        <id>Q12485-1</id>
        <name>Transposon Ty1-GR2 Gag polyprotein</name>
        <sequence type="external"/>
    </isoform>
    <text evidence="1">The Gag-Pol polyprotein is generated by a +1 ribosomal frameshift. The ratio of Gag:Gag-Pol varies between 20:1 and 5:1 (By similarity).</text>
</comment>
<comment type="domain">
    <text evidence="1">The C-terminal RNA-binding region of CA is sufficient for all its nucleocapsid-like chaperone activities.</text>
</comment>
<comment type="domain">
    <text evidence="1">Integrase core domain contains the D-x(n)-D-x(35)-E motif, named for the phylogenetically conserved glutamic acid and aspartic acid residues and the invariant 35 amino acid spacing between the second and third acidic residues. Each acidic residue of the D,D(35)E motif is independently essential for the 3'-processing and strand transfer activities of purified integrase protein (By similarity).</text>
</comment>
<comment type="PTM">
    <text evidence="1">Initially, virus-like particles (VLPs) are composed of the structural unprocessed proteins Gag and Gag-Pol, and also contain the host initiator methionine tRNA (tRNA(i)-Met) which serves as a primer for minus-strand DNA synthesis, and a dimer of genomic Ty RNA. Processing of the polyproteins occurs within the particle and proceeds by an ordered pathway, called maturation. First, the protease (PR) is released by autocatalytic cleavage of the Gag-Pol polyprotein yielding capsid protein p45 and a Pol-p154 precursor protein. This cleavage is a prerequisite for subsequent processing of Pol-p154 at the remaining sites to release the mature structural and catalytic proteins. Maturation takes place prior to the RT reaction and is required to produce transposition-competent VLPs (By similarity).</text>
</comment>
<comment type="miscellaneous">
    <text>Retrotransposons are mobile genetic entities that are able to replicate via an RNA intermediate and a reverse transcription step. In contrast to retroviruses, retrotransposons are non-infectious, lack an envelope and remain intracellular. Ty1 retrotransposons belong to the copia elements (pseudoviridae).</text>
</comment>
<comment type="miscellaneous">
    <molecule>Isoform Transposon Ty1-GR2 Gag-Pol polyprotein</molecule>
    <text>Produced by +1 ribosomal frameshifting between codon Leu-435 and Gly-436 of the YGR038C-A ORF.</text>
</comment>
<comment type="sequence caution" evidence="6">
    <conflict type="erroneous initiation">
        <sequence resource="EMBL-CDS" id="CAA97027"/>
    </conflict>
</comment>
<comment type="sequence caution" evidence="6">
    <conflict type="erroneous initiation">
        <sequence resource="EMBL-CDS" id="CAA97035"/>
    </conflict>
</comment>
<evidence type="ECO:0000250" key="1"/>
<evidence type="ECO:0000250" key="2">
    <source>
        <dbReference type="UniProtKB" id="Q99231"/>
    </source>
</evidence>
<evidence type="ECO:0000255" key="3">
    <source>
        <dbReference type="PROSITE-ProRule" id="PRU00457"/>
    </source>
</evidence>
<evidence type="ECO:0000255" key="4">
    <source>
        <dbReference type="PROSITE-ProRule" id="PRU10094"/>
    </source>
</evidence>
<evidence type="ECO:0000256" key="5">
    <source>
        <dbReference type="SAM" id="MobiDB-lite"/>
    </source>
</evidence>
<evidence type="ECO:0000305" key="6"/>
<protein>
    <recommendedName>
        <fullName>Transposon Ty1-GR2 Gag-Pol polyprotein</fullName>
    </recommendedName>
    <alternativeName>
        <fullName>Gag-Pol-p199</fullName>
    </alternativeName>
    <alternativeName>
        <fullName>TY1A-TY1B</fullName>
    </alternativeName>
    <alternativeName>
        <fullName>Transposon Ty1 TYA-TYB polyprotein</fullName>
    </alternativeName>
    <alternativeName>
        <fullName>p190</fullName>
    </alternativeName>
    <component>
        <recommendedName>
            <fullName>Capsid protein</fullName>
            <shortName>CA</shortName>
        </recommendedName>
        <alternativeName>
            <fullName>Gag-p45</fullName>
        </alternativeName>
        <alternativeName>
            <fullName>p54</fullName>
        </alternativeName>
    </component>
    <component>
        <recommendedName>
            <fullName>Ty1 protease</fullName>
            <shortName>PR</shortName>
            <ecNumber>3.4.23.-</ecNumber>
        </recommendedName>
        <alternativeName>
            <fullName>Pol-p20</fullName>
        </alternativeName>
        <alternativeName>
            <fullName>p23</fullName>
        </alternativeName>
    </component>
    <component>
        <recommendedName>
            <fullName>Integrase</fullName>
            <shortName>IN</shortName>
        </recommendedName>
        <alternativeName>
            <fullName>Pol-p71</fullName>
        </alternativeName>
        <alternativeName>
            <fullName>p84</fullName>
        </alternativeName>
        <alternativeName>
            <fullName>p90</fullName>
        </alternativeName>
    </component>
    <component>
        <recommendedName>
            <fullName>Reverse transcriptase/ribonuclease H</fullName>
            <shortName>RT</shortName>
            <shortName>RT-RH</shortName>
            <ecNumber>2.7.7.49</ecNumber>
            <ecNumber>2.7.7.7</ecNumber>
            <ecNumber>3.1.26.4</ecNumber>
        </recommendedName>
        <alternativeName>
            <fullName>Pol-p63</fullName>
        </alternativeName>
        <alternativeName>
            <fullName>p60</fullName>
        </alternativeName>
    </component>
</protein>